<protein>
    <recommendedName>
        <fullName>Unknown protein from spot 111 of 2D-PAGE of thylakoid</fullName>
    </recommendedName>
</protein>
<organism>
    <name type="scientific">Pisum sativum</name>
    <name type="common">Garden pea</name>
    <name type="synonym">Lathyrus oleraceus</name>
    <dbReference type="NCBI Taxonomy" id="3888"/>
    <lineage>
        <taxon>Eukaryota</taxon>
        <taxon>Viridiplantae</taxon>
        <taxon>Streptophyta</taxon>
        <taxon>Embryophyta</taxon>
        <taxon>Tracheophyta</taxon>
        <taxon>Spermatophyta</taxon>
        <taxon>Magnoliopsida</taxon>
        <taxon>eudicotyledons</taxon>
        <taxon>Gunneridae</taxon>
        <taxon>Pentapetalae</taxon>
        <taxon>rosids</taxon>
        <taxon>fabids</taxon>
        <taxon>Fabales</taxon>
        <taxon>Fabaceae</taxon>
        <taxon>Papilionoideae</taxon>
        <taxon>50 kb inversion clade</taxon>
        <taxon>NPAAA clade</taxon>
        <taxon>Hologalegina</taxon>
        <taxon>IRL clade</taxon>
        <taxon>Fabeae</taxon>
        <taxon>Pisum</taxon>
    </lineage>
</organism>
<sequence length="12" mass="1244">RDVAVGSFLPPS</sequence>
<accession>P82329</accession>
<reference evidence="3" key="1">
    <citation type="journal article" date="2000" name="Plant Cell">
        <title>Proteomics of the chloroplast: systematic identification and targeting analysis of lumenal and peripheral thylakoid proteins.</title>
        <authorList>
            <person name="Peltier J.-B."/>
            <person name="Friso G."/>
            <person name="Kalume D.E."/>
            <person name="Roepstorff P."/>
            <person name="Nilsson F."/>
            <person name="Adamska I."/>
            <person name="van Wijk K.J."/>
        </authorList>
    </citation>
    <scope>PROTEIN SEQUENCE</scope>
    <scope>SUBCELLULAR LOCATION</scope>
    <source>
        <strain evidence="1">cv. De Grace</strain>
        <tissue evidence="1">Leaf</tissue>
    </source>
</reference>
<comment type="subcellular location">
    <subcellularLocation>
        <location evidence="1">Plastid</location>
        <location evidence="1">Chloroplast thylakoid</location>
    </subcellularLocation>
</comment>
<comment type="miscellaneous">
    <text evidence="1">On the 2D-gel the determined pI of this protein is: 6.5, its MW is: 24.1 kDa.</text>
</comment>
<dbReference type="GO" id="GO:0009534">
    <property type="term" value="C:chloroplast thylakoid"/>
    <property type="evidence" value="ECO:0007669"/>
    <property type="project" value="UniProtKB-SubCell"/>
</dbReference>
<keyword id="KW-0150">Chloroplast</keyword>
<keyword id="KW-0903">Direct protein sequencing</keyword>
<keyword id="KW-0934">Plastid</keyword>
<keyword id="KW-0793">Thylakoid</keyword>
<proteinExistence type="evidence at protein level"/>
<name>UT111_PEA</name>
<evidence type="ECO:0000269" key="1">
    <source>
    </source>
</evidence>
<evidence type="ECO:0000303" key="2">
    <source>
    </source>
</evidence>
<evidence type="ECO:0000305" key="3"/>
<feature type="chain" id="PRO_0000234473" description="Unknown protein from spot 111 of 2D-PAGE of thylakoid">
    <location>
        <begin position="1"/>
        <end position="12" status="greater than"/>
    </location>
</feature>
<feature type="non-terminal residue" evidence="2">
    <location>
        <position position="12"/>
    </location>
</feature>